<sequence length="425" mass="47822">MKLPADLRSYSQITRNSIAMILAGGRGTRLRQLTDWRAKPAVPFGGKFRIIDFPLSNCVNSGIRRIGVATQYKAQSLISHIQQGWGFLDGRFQEFIELLPAQQRTEESWYQGTADAVYQNIDILRSHNPDYVLILGGDHVYKMDYAKLLADHIAKSAEMTIACIDLPLEEASAFGVMSVTKDGRVTDFTEKPSVPTAVPGRPGYALVSMGIYVFNADFLFDQLIRDHDDPNSSHDFGKDLIPHLVPRSRVFTHRFSDSCVNMVSGVPYWRDVGTVEAYWEANLDLVQVTPDLNLYDQDWPIWTHQEQLPPAKFVFDNDDRRGQALDSMVSGGCIISGATVRRSLLFSNVQVRSYSVLEDSVILPNVDVGRNARLRRVVVDKNCIIPPGLEVGFDPVEDRKHFYVTETGVTLVTPEMLGQKIHYVR</sequence>
<comment type="function">
    <text evidence="1">Involved in the biosynthesis of ADP-glucose, a building block required for the elongation reactions to produce glycogen. Catalyzes the reaction between ATP and alpha-D-glucose 1-phosphate (G1P) to produce pyrophosphate and ADP-Glc.</text>
</comment>
<comment type="catalytic activity">
    <reaction evidence="1">
        <text>alpha-D-glucose 1-phosphate + ATP + H(+) = ADP-alpha-D-glucose + diphosphate</text>
        <dbReference type="Rhea" id="RHEA:12120"/>
        <dbReference type="ChEBI" id="CHEBI:15378"/>
        <dbReference type="ChEBI" id="CHEBI:30616"/>
        <dbReference type="ChEBI" id="CHEBI:33019"/>
        <dbReference type="ChEBI" id="CHEBI:57498"/>
        <dbReference type="ChEBI" id="CHEBI:58601"/>
        <dbReference type="EC" id="2.7.7.27"/>
    </reaction>
</comment>
<comment type="pathway">
    <text evidence="1">Glycan biosynthesis; glycogen biosynthesis.</text>
</comment>
<comment type="subunit">
    <text evidence="1">Homotetramer.</text>
</comment>
<comment type="similarity">
    <text evidence="1">Belongs to the bacterial/plant glucose-1-phosphate adenylyltransferase family.</text>
</comment>
<dbReference type="EC" id="2.7.7.27" evidence="1"/>
<dbReference type="EMBL" id="CP000103">
    <property type="protein sequence ID" value="ABB74025.1"/>
    <property type="molecule type" value="Genomic_DNA"/>
</dbReference>
<dbReference type="RefSeq" id="WP_011380075.1">
    <property type="nucleotide sequence ID" value="NC_007614.1"/>
</dbReference>
<dbReference type="SMR" id="Q2YB46"/>
<dbReference type="STRING" id="323848.Nmul_A0718"/>
<dbReference type="KEGG" id="nmu:Nmul_A0718"/>
<dbReference type="eggNOG" id="COG0448">
    <property type="taxonomic scope" value="Bacteria"/>
</dbReference>
<dbReference type="HOGENOM" id="CLU_029499_14_1_4"/>
<dbReference type="OrthoDB" id="9801810at2"/>
<dbReference type="UniPathway" id="UPA00164"/>
<dbReference type="Proteomes" id="UP000002718">
    <property type="component" value="Chromosome"/>
</dbReference>
<dbReference type="GO" id="GO:0005524">
    <property type="term" value="F:ATP binding"/>
    <property type="evidence" value="ECO:0007669"/>
    <property type="project" value="UniProtKB-KW"/>
</dbReference>
<dbReference type="GO" id="GO:0008878">
    <property type="term" value="F:glucose-1-phosphate adenylyltransferase activity"/>
    <property type="evidence" value="ECO:0007669"/>
    <property type="project" value="UniProtKB-UniRule"/>
</dbReference>
<dbReference type="GO" id="GO:0005978">
    <property type="term" value="P:glycogen biosynthetic process"/>
    <property type="evidence" value="ECO:0007669"/>
    <property type="project" value="UniProtKB-UniRule"/>
</dbReference>
<dbReference type="CDD" id="cd02508">
    <property type="entry name" value="ADP_Glucose_PP"/>
    <property type="match status" value="1"/>
</dbReference>
<dbReference type="CDD" id="cd04651">
    <property type="entry name" value="LbH_G1P_AT_C"/>
    <property type="match status" value="1"/>
</dbReference>
<dbReference type="Gene3D" id="2.160.10.10">
    <property type="entry name" value="Hexapeptide repeat proteins"/>
    <property type="match status" value="1"/>
</dbReference>
<dbReference type="Gene3D" id="3.90.550.10">
    <property type="entry name" value="Spore Coat Polysaccharide Biosynthesis Protein SpsA, Chain A"/>
    <property type="match status" value="1"/>
</dbReference>
<dbReference type="HAMAP" id="MF_00624">
    <property type="entry name" value="GlgC"/>
    <property type="match status" value="1"/>
</dbReference>
<dbReference type="InterPro" id="IPR011831">
    <property type="entry name" value="ADP-Glc_PPase"/>
</dbReference>
<dbReference type="InterPro" id="IPR005836">
    <property type="entry name" value="ADP_Glu_pyroP_CS"/>
</dbReference>
<dbReference type="InterPro" id="IPR023049">
    <property type="entry name" value="GlgC_bac"/>
</dbReference>
<dbReference type="InterPro" id="IPR056818">
    <property type="entry name" value="GlmU/GlgC-like_hexapep"/>
</dbReference>
<dbReference type="InterPro" id="IPR005835">
    <property type="entry name" value="NTP_transferase_dom"/>
</dbReference>
<dbReference type="InterPro" id="IPR029044">
    <property type="entry name" value="Nucleotide-diphossugar_trans"/>
</dbReference>
<dbReference type="InterPro" id="IPR011004">
    <property type="entry name" value="Trimer_LpxA-like_sf"/>
</dbReference>
<dbReference type="NCBIfam" id="TIGR02091">
    <property type="entry name" value="glgC"/>
    <property type="match status" value="1"/>
</dbReference>
<dbReference type="NCBIfam" id="NF001947">
    <property type="entry name" value="PRK00725.1"/>
    <property type="match status" value="1"/>
</dbReference>
<dbReference type="NCBIfam" id="NF002023">
    <property type="entry name" value="PRK00844.1"/>
    <property type="match status" value="1"/>
</dbReference>
<dbReference type="PANTHER" id="PTHR43523:SF2">
    <property type="entry name" value="GLUCOSE-1-PHOSPHATE ADENYLYLTRANSFERASE"/>
    <property type="match status" value="1"/>
</dbReference>
<dbReference type="PANTHER" id="PTHR43523">
    <property type="entry name" value="GLUCOSE-1-PHOSPHATE ADENYLYLTRANSFERASE-RELATED"/>
    <property type="match status" value="1"/>
</dbReference>
<dbReference type="Pfam" id="PF24894">
    <property type="entry name" value="Hexapep_GlmU"/>
    <property type="match status" value="1"/>
</dbReference>
<dbReference type="Pfam" id="PF00483">
    <property type="entry name" value="NTP_transferase"/>
    <property type="match status" value="1"/>
</dbReference>
<dbReference type="SUPFAM" id="SSF53448">
    <property type="entry name" value="Nucleotide-diphospho-sugar transferases"/>
    <property type="match status" value="1"/>
</dbReference>
<dbReference type="SUPFAM" id="SSF51161">
    <property type="entry name" value="Trimeric LpxA-like enzymes"/>
    <property type="match status" value="1"/>
</dbReference>
<dbReference type="PROSITE" id="PS00808">
    <property type="entry name" value="ADP_GLC_PYROPHOSPH_1"/>
    <property type="match status" value="1"/>
</dbReference>
<dbReference type="PROSITE" id="PS00809">
    <property type="entry name" value="ADP_GLC_PYROPHOSPH_2"/>
    <property type="match status" value="1"/>
</dbReference>
<dbReference type="PROSITE" id="PS00810">
    <property type="entry name" value="ADP_GLC_PYROPHOSPH_3"/>
    <property type="match status" value="1"/>
</dbReference>
<reference key="1">
    <citation type="submission" date="2005-08" db="EMBL/GenBank/DDBJ databases">
        <title>Complete sequence of chromosome 1 of Nitrosospira multiformis ATCC 25196.</title>
        <authorList>
            <person name="Copeland A."/>
            <person name="Lucas S."/>
            <person name="Lapidus A."/>
            <person name="Barry K."/>
            <person name="Detter J.C."/>
            <person name="Glavina T."/>
            <person name="Hammon N."/>
            <person name="Israni S."/>
            <person name="Pitluck S."/>
            <person name="Chain P."/>
            <person name="Malfatti S."/>
            <person name="Shin M."/>
            <person name="Vergez L."/>
            <person name="Schmutz J."/>
            <person name="Larimer F."/>
            <person name="Land M."/>
            <person name="Hauser L."/>
            <person name="Kyrpides N."/>
            <person name="Lykidis A."/>
            <person name="Richardson P."/>
        </authorList>
    </citation>
    <scope>NUCLEOTIDE SEQUENCE [LARGE SCALE GENOMIC DNA]</scope>
    <source>
        <strain>ATCC 25196 / NCIMB 11849 / C 71</strain>
    </source>
</reference>
<protein>
    <recommendedName>
        <fullName evidence="1">Glucose-1-phosphate adenylyltransferase</fullName>
        <ecNumber evidence="1">2.7.7.27</ecNumber>
    </recommendedName>
    <alternativeName>
        <fullName evidence="1">ADP-glucose pyrophosphorylase</fullName>
        <shortName evidence="1">ADPGlc PPase</shortName>
    </alternativeName>
    <alternativeName>
        <fullName evidence="1">ADP-glucose synthase</fullName>
    </alternativeName>
</protein>
<feature type="chain" id="PRO_0000261883" description="Glucose-1-phosphate adenylyltransferase">
    <location>
        <begin position="1"/>
        <end position="425"/>
    </location>
</feature>
<feature type="binding site" evidence="1">
    <location>
        <position position="110"/>
    </location>
    <ligand>
        <name>alpha-D-glucose 1-phosphate</name>
        <dbReference type="ChEBI" id="CHEBI:58601"/>
    </ligand>
</feature>
<feature type="binding site" evidence="1">
    <location>
        <position position="175"/>
    </location>
    <ligand>
        <name>alpha-D-glucose 1-phosphate</name>
        <dbReference type="ChEBI" id="CHEBI:58601"/>
    </ligand>
</feature>
<feature type="binding site" evidence="1">
    <location>
        <begin position="190"/>
        <end position="191"/>
    </location>
    <ligand>
        <name>alpha-D-glucose 1-phosphate</name>
        <dbReference type="ChEBI" id="CHEBI:58601"/>
    </ligand>
</feature>
<feature type="binding site" evidence="1">
    <location>
        <position position="208"/>
    </location>
    <ligand>
        <name>alpha-D-glucose 1-phosphate</name>
        <dbReference type="ChEBI" id="CHEBI:58601"/>
    </ligand>
</feature>
<organism>
    <name type="scientific">Nitrosospira multiformis (strain ATCC 25196 / NCIMB 11849 / C 71)</name>
    <dbReference type="NCBI Taxonomy" id="323848"/>
    <lineage>
        <taxon>Bacteria</taxon>
        <taxon>Pseudomonadati</taxon>
        <taxon>Pseudomonadota</taxon>
        <taxon>Betaproteobacteria</taxon>
        <taxon>Nitrosomonadales</taxon>
        <taxon>Nitrosomonadaceae</taxon>
        <taxon>Nitrosospira</taxon>
    </lineage>
</organism>
<evidence type="ECO:0000255" key="1">
    <source>
        <dbReference type="HAMAP-Rule" id="MF_00624"/>
    </source>
</evidence>
<gene>
    <name evidence="1" type="primary">glgC</name>
    <name type="ordered locus">Nmul_A0718</name>
</gene>
<keyword id="KW-0067">ATP-binding</keyword>
<keyword id="KW-0119">Carbohydrate metabolism</keyword>
<keyword id="KW-0320">Glycogen biosynthesis</keyword>
<keyword id="KW-0321">Glycogen metabolism</keyword>
<keyword id="KW-0547">Nucleotide-binding</keyword>
<keyword id="KW-0548">Nucleotidyltransferase</keyword>
<keyword id="KW-1185">Reference proteome</keyword>
<keyword id="KW-0808">Transferase</keyword>
<proteinExistence type="inferred from homology"/>
<name>GLGC_NITMU</name>
<accession>Q2YB46</accession>